<sequence>MPIDKDIKKVLIIGSGPIQIGQAAEFDYSGSQACKSLREEGIETVLVNSNPATIQTDMDMADTVYTEPLTPEIVSEIIKKENVDAILPTMGGQTGLNIATGLGDLGLLDGIKVLGSDIQTIKDVEDRDLFGHFMDKLNEPIPKCHAVESVEEAIEAVKDIGYPVIVRPAFTLGGTGGGVAYNEEELIEIATHGLDMSFINQVLIDESVLGWKEFEYEVMRDKEDTCIIVCNMENIDPMGIHTGESVVVAPAQNLNDRDSQALRDASIKIIRALGIQGGCNIQFAVNPETGEYKVIEVNPRVSRSSALASKATGYPIAKISSKIALGMTLDEIKNDITKETPASFEPAIDYVVVKIPRWPFDKFRGINREIGVQMKATGEVMAIGRTFEEAIQKAIRSLDMGHDGFEYVEYTEDDLANPTDERLFQLYSAIKDGMDLDKIQKLTNIDKFFLYKIRNIVNFENEVTEEKLNDADFLRKAKQMGCSNKRLAALSNQTEEYIRNLLNRFNIKQSYKMVDTCAAEFEAKTPYYYSTYDSGNELKSSNKKKIVILGAGPIRIGQGIEFDYCCVHSSLALKDEGIETILINNNPETVSTDYDISDKLFFEPITFEDVMGIIDQEKPDGVIVQFGGQTSINLAVPLANAGVKILGTPYESIDGVEDRELFAKLLNKLHIHQAPYGTANSFEEAREIAERITFPVLVRPSYVIGGRAMEIVYDNNELEKYMKEAVKVSPEHPILVDKFLEDAIELDVDVLCDGEEVFIAGIMEHIEEAGVHSGDSACVIPPQTIPEHILNTIREYSTKLALELDVKGLMNIQYAVKLDEEMVYIIEANPRASRTVPFVSKAIGVPLAKVATWIMTGAKLKDFNLTKEIKIDHVAVKESVFPFLKLPESDTVLGPEMKSTGESIGVDENFGMAFYKSQLAAGMDLPKEGKIFISVKEQDKKKIRPIAEKAANLGFELAATSGTADAAKGVDIEKIKKVSQGSPNIRDAILNKEIDLIINTSEGKQSAQDGYIIRRLAIELGIPYVTTLSGARAALNAIEAVQNNEITVKSLNEHIDGE</sequence>
<name>CARB_METS3</name>
<comment type="function">
    <text evidence="1">Large subunit of the glutamine-dependent carbamoyl phosphate synthetase (CPSase). CPSase catalyzes the formation of carbamoyl phosphate from the ammonia moiety of glutamine, carbonate, and phosphate donated by ATP, constituting the first step of 2 biosynthetic pathways, one leading to arginine and/or urea and the other to pyrimidine nucleotides. The large subunit (synthetase) binds the substrates ammonia (free or transferred from glutamine from the small subunit), hydrogencarbonate and ATP and carries out an ATP-coupled ligase reaction, activating hydrogencarbonate by forming carboxy phosphate which reacts with ammonia to form carbamoyl phosphate.</text>
</comment>
<comment type="catalytic activity">
    <reaction evidence="1">
        <text>hydrogencarbonate + L-glutamine + 2 ATP + H2O = carbamoyl phosphate + L-glutamate + 2 ADP + phosphate + 2 H(+)</text>
        <dbReference type="Rhea" id="RHEA:18633"/>
        <dbReference type="ChEBI" id="CHEBI:15377"/>
        <dbReference type="ChEBI" id="CHEBI:15378"/>
        <dbReference type="ChEBI" id="CHEBI:17544"/>
        <dbReference type="ChEBI" id="CHEBI:29985"/>
        <dbReference type="ChEBI" id="CHEBI:30616"/>
        <dbReference type="ChEBI" id="CHEBI:43474"/>
        <dbReference type="ChEBI" id="CHEBI:58228"/>
        <dbReference type="ChEBI" id="CHEBI:58359"/>
        <dbReference type="ChEBI" id="CHEBI:456216"/>
        <dbReference type="EC" id="6.3.5.5"/>
    </reaction>
</comment>
<comment type="catalytic activity">
    <molecule>Carbamoyl phosphate synthase large chain</molecule>
    <reaction evidence="1">
        <text>hydrogencarbonate + NH4(+) + 2 ATP = carbamoyl phosphate + 2 ADP + phosphate + 2 H(+)</text>
        <dbReference type="Rhea" id="RHEA:18029"/>
        <dbReference type="ChEBI" id="CHEBI:15378"/>
        <dbReference type="ChEBI" id="CHEBI:17544"/>
        <dbReference type="ChEBI" id="CHEBI:28938"/>
        <dbReference type="ChEBI" id="CHEBI:30616"/>
        <dbReference type="ChEBI" id="CHEBI:43474"/>
        <dbReference type="ChEBI" id="CHEBI:58228"/>
        <dbReference type="ChEBI" id="CHEBI:456216"/>
        <dbReference type="EC" id="6.3.4.16"/>
    </reaction>
</comment>
<comment type="cofactor">
    <cofactor evidence="1">
        <name>Mg(2+)</name>
        <dbReference type="ChEBI" id="CHEBI:18420"/>
    </cofactor>
    <cofactor evidence="1">
        <name>Mn(2+)</name>
        <dbReference type="ChEBI" id="CHEBI:29035"/>
    </cofactor>
    <text evidence="1">Binds 4 Mg(2+) or Mn(2+) ions per subunit.</text>
</comment>
<comment type="pathway">
    <text evidence="1">Amino-acid biosynthesis; L-arginine biosynthesis; carbamoyl phosphate from bicarbonate: step 1/1.</text>
</comment>
<comment type="pathway">
    <text evidence="1">Pyrimidine metabolism; UMP biosynthesis via de novo pathway; (S)-dihydroorotate from bicarbonate: step 1/3.</text>
</comment>
<comment type="subunit">
    <text evidence="1">Composed of two chains; the small (or glutamine) chain promotes the hydrolysis of glutamine to ammonia, which is used by the large (or ammonia) chain to synthesize carbamoyl phosphate. Tetramer of heterodimers (alpha,beta)4.</text>
</comment>
<comment type="domain">
    <text evidence="1">The large subunit is composed of 2 ATP-grasp domains that are involved in binding the 2 ATP molecules needed for carbamoyl phosphate synthesis. The N-terminal ATP-grasp domain (referred to as the carboxyphosphate synthetic component) catalyzes the ATP-dependent phosphorylation of hydrogencarbonate to carboxyphosphate and the subsequent nucleophilic attack by ammonia to form a carbamate intermediate. The C-terminal ATP-grasp domain (referred to as the carbamoyl phosphate synthetic component) then catalyzes the phosphorylation of carbamate with the second ATP to form the end product carbamoyl phosphate. The reactive and unstable enzyme intermediates are sequentially channeled from one active site to the next through the interior of the protein over a distance of at least 96 A.</text>
</comment>
<comment type="similarity">
    <text evidence="1">Belongs to the CarB family.</text>
</comment>
<reference key="1">
    <citation type="journal article" date="2007" name="Proc. Natl. Acad. Sci. U.S.A.">
        <title>Genomic and metabolic adaptations of Methanobrevibacter smithii to the human gut.</title>
        <authorList>
            <person name="Samuel B.S."/>
            <person name="Hansen E.E."/>
            <person name="Manchester J.K."/>
            <person name="Coutinho P.M."/>
            <person name="Henrissat B."/>
            <person name="Fulton R."/>
            <person name="Latreille P."/>
            <person name="Kim K."/>
            <person name="Wilson R.K."/>
            <person name="Gordon J.I."/>
        </authorList>
    </citation>
    <scope>NUCLEOTIDE SEQUENCE [LARGE SCALE GENOMIC DNA]</scope>
    <source>
        <strain>ATCC 35061 / DSM 861 / OCM 144 / PS</strain>
    </source>
</reference>
<proteinExistence type="inferred from homology"/>
<protein>
    <recommendedName>
        <fullName evidence="1">Carbamoyl phosphate synthase large chain</fullName>
        <ecNumber evidence="1">6.3.4.16</ecNumber>
        <ecNumber evidence="1">6.3.5.5</ecNumber>
    </recommendedName>
    <alternativeName>
        <fullName evidence="1">Carbamoyl phosphate synthetase ammonia chain</fullName>
    </alternativeName>
</protein>
<accession>A5UKG5</accession>
<gene>
    <name evidence="1" type="primary">carB</name>
    <name type="ordered locus">Msm_0488</name>
</gene>
<organism>
    <name type="scientific">Methanobrevibacter smithii (strain ATCC 35061 / DSM 861 / OCM 144 / PS)</name>
    <dbReference type="NCBI Taxonomy" id="420247"/>
    <lineage>
        <taxon>Archaea</taxon>
        <taxon>Methanobacteriati</taxon>
        <taxon>Methanobacteriota</taxon>
        <taxon>Methanomada group</taxon>
        <taxon>Methanobacteria</taxon>
        <taxon>Methanobacteriales</taxon>
        <taxon>Methanobacteriaceae</taxon>
        <taxon>Methanobrevibacter</taxon>
    </lineage>
</organism>
<feature type="chain" id="PRO_1000066367" description="Carbamoyl phosphate synthase large chain">
    <location>
        <begin position="1"/>
        <end position="1058"/>
    </location>
</feature>
<feature type="domain" description="ATP-grasp 1" evidence="1">
    <location>
        <begin position="131"/>
        <end position="325"/>
    </location>
</feature>
<feature type="domain" description="ATP-grasp 2" evidence="1">
    <location>
        <begin position="663"/>
        <end position="856"/>
    </location>
</feature>
<feature type="domain" description="MGS-like" evidence="1">
    <location>
        <begin position="923"/>
        <end position="1058"/>
    </location>
</feature>
<feature type="region of interest" description="Carboxyphosphate synthetic domain" evidence="1">
    <location>
        <begin position="1"/>
        <end position="399"/>
    </location>
</feature>
<feature type="region of interest" description="Oligomerization domain" evidence="1">
    <location>
        <begin position="400"/>
        <end position="538"/>
    </location>
</feature>
<feature type="region of interest" description="Carbamoyl phosphate synthetic domain" evidence="1">
    <location>
        <begin position="539"/>
        <end position="924"/>
    </location>
</feature>
<feature type="region of interest" description="Allosteric domain" evidence="1">
    <location>
        <begin position="925"/>
        <end position="1058"/>
    </location>
</feature>
<feature type="binding site" evidence="1">
    <location>
        <position position="127"/>
    </location>
    <ligand>
        <name>ATP</name>
        <dbReference type="ChEBI" id="CHEBI:30616"/>
        <label>1</label>
    </ligand>
</feature>
<feature type="binding site" evidence="1">
    <location>
        <position position="167"/>
    </location>
    <ligand>
        <name>ATP</name>
        <dbReference type="ChEBI" id="CHEBI:30616"/>
        <label>1</label>
    </ligand>
</feature>
<feature type="binding site" evidence="1">
    <location>
        <position position="173"/>
    </location>
    <ligand>
        <name>ATP</name>
        <dbReference type="ChEBI" id="CHEBI:30616"/>
        <label>1</label>
    </ligand>
</feature>
<feature type="binding site" evidence="1">
    <location>
        <position position="174"/>
    </location>
    <ligand>
        <name>ATP</name>
        <dbReference type="ChEBI" id="CHEBI:30616"/>
        <label>1</label>
    </ligand>
</feature>
<feature type="binding site" evidence="1">
    <location>
        <position position="206"/>
    </location>
    <ligand>
        <name>ATP</name>
        <dbReference type="ChEBI" id="CHEBI:30616"/>
        <label>1</label>
    </ligand>
</feature>
<feature type="binding site" evidence="1">
    <location>
        <position position="208"/>
    </location>
    <ligand>
        <name>ATP</name>
        <dbReference type="ChEBI" id="CHEBI:30616"/>
        <label>1</label>
    </ligand>
</feature>
<feature type="binding site" evidence="1">
    <location>
        <position position="213"/>
    </location>
    <ligand>
        <name>ATP</name>
        <dbReference type="ChEBI" id="CHEBI:30616"/>
        <label>1</label>
    </ligand>
</feature>
<feature type="binding site" evidence="1">
    <location>
        <position position="239"/>
    </location>
    <ligand>
        <name>ATP</name>
        <dbReference type="ChEBI" id="CHEBI:30616"/>
        <label>1</label>
    </ligand>
</feature>
<feature type="binding site" evidence="1">
    <location>
        <position position="240"/>
    </location>
    <ligand>
        <name>ATP</name>
        <dbReference type="ChEBI" id="CHEBI:30616"/>
        <label>1</label>
    </ligand>
</feature>
<feature type="binding site" evidence="1">
    <location>
        <position position="241"/>
    </location>
    <ligand>
        <name>ATP</name>
        <dbReference type="ChEBI" id="CHEBI:30616"/>
        <label>1</label>
    </ligand>
</feature>
<feature type="binding site" evidence="1">
    <location>
        <position position="282"/>
    </location>
    <ligand>
        <name>ATP</name>
        <dbReference type="ChEBI" id="CHEBI:30616"/>
        <label>1</label>
    </ligand>
</feature>
<feature type="binding site" evidence="1">
    <location>
        <position position="282"/>
    </location>
    <ligand>
        <name>Mg(2+)</name>
        <dbReference type="ChEBI" id="CHEBI:18420"/>
        <label>1</label>
    </ligand>
</feature>
<feature type="binding site" evidence="1">
    <location>
        <position position="282"/>
    </location>
    <ligand>
        <name>Mn(2+)</name>
        <dbReference type="ChEBI" id="CHEBI:29035"/>
        <label>1</label>
    </ligand>
</feature>
<feature type="binding site" evidence="1">
    <location>
        <position position="296"/>
    </location>
    <ligand>
        <name>ATP</name>
        <dbReference type="ChEBI" id="CHEBI:30616"/>
        <label>1</label>
    </ligand>
</feature>
<feature type="binding site" evidence="1">
    <location>
        <position position="296"/>
    </location>
    <ligand>
        <name>Mg(2+)</name>
        <dbReference type="ChEBI" id="CHEBI:18420"/>
        <label>1</label>
    </ligand>
</feature>
<feature type="binding site" evidence="1">
    <location>
        <position position="296"/>
    </location>
    <ligand>
        <name>Mg(2+)</name>
        <dbReference type="ChEBI" id="CHEBI:18420"/>
        <label>2</label>
    </ligand>
</feature>
<feature type="binding site" evidence="1">
    <location>
        <position position="296"/>
    </location>
    <ligand>
        <name>Mn(2+)</name>
        <dbReference type="ChEBI" id="CHEBI:29035"/>
        <label>1</label>
    </ligand>
</feature>
<feature type="binding site" evidence="1">
    <location>
        <position position="296"/>
    </location>
    <ligand>
        <name>Mn(2+)</name>
        <dbReference type="ChEBI" id="CHEBI:29035"/>
        <label>2</label>
    </ligand>
</feature>
<feature type="binding site" evidence="1">
    <location>
        <position position="298"/>
    </location>
    <ligand>
        <name>Mg(2+)</name>
        <dbReference type="ChEBI" id="CHEBI:18420"/>
        <label>2</label>
    </ligand>
</feature>
<feature type="binding site" evidence="1">
    <location>
        <position position="298"/>
    </location>
    <ligand>
        <name>Mn(2+)</name>
        <dbReference type="ChEBI" id="CHEBI:29035"/>
        <label>2</label>
    </ligand>
</feature>
<feature type="binding site" evidence="1">
    <location>
        <position position="699"/>
    </location>
    <ligand>
        <name>ATP</name>
        <dbReference type="ChEBI" id="CHEBI:30616"/>
        <label>2</label>
    </ligand>
</feature>
<feature type="binding site" evidence="1">
    <location>
        <position position="738"/>
    </location>
    <ligand>
        <name>ATP</name>
        <dbReference type="ChEBI" id="CHEBI:30616"/>
        <label>2</label>
    </ligand>
</feature>
<feature type="binding site" evidence="1">
    <location>
        <position position="740"/>
    </location>
    <ligand>
        <name>ATP</name>
        <dbReference type="ChEBI" id="CHEBI:30616"/>
        <label>2</label>
    </ligand>
</feature>
<feature type="binding site" evidence="1">
    <location>
        <position position="745"/>
    </location>
    <ligand>
        <name>ATP</name>
        <dbReference type="ChEBI" id="CHEBI:30616"/>
        <label>2</label>
    </ligand>
</feature>
<feature type="binding site" evidence="1">
    <location>
        <position position="770"/>
    </location>
    <ligand>
        <name>ATP</name>
        <dbReference type="ChEBI" id="CHEBI:30616"/>
        <label>2</label>
    </ligand>
</feature>
<feature type="binding site" evidence="1">
    <location>
        <position position="771"/>
    </location>
    <ligand>
        <name>ATP</name>
        <dbReference type="ChEBI" id="CHEBI:30616"/>
        <label>2</label>
    </ligand>
</feature>
<feature type="binding site" evidence="1">
    <location>
        <position position="772"/>
    </location>
    <ligand>
        <name>ATP</name>
        <dbReference type="ChEBI" id="CHEBI:30616"/>
        <label>2</label>
    </ligand>
</feature>
<feature type="binding site" evidence="1">
    <location>
        <position position="773"/>
    </location>
    <ligand>
        <name>ATP</name>
        <dbReference type="ChEBI" id="CHEBI:30616"/>
        <label>2</label>
    </ligand>
</feature>
<feature type="binding site" evidence="1">
    <location>
        <position position="813"/>
    </location>
    <ligand>
        <name>ATP</name>
        <dbReference type="ChEBI" id="CHEBI:30616"/>
        <label>2</label>
    </ligand>
</feature>
<feature type="binding site" evidence="1">
    <location>
        <position position="813"/>
    </location>
    <ligand>
        <name>Mg(2+)</name>
        <dbReference type="ChEBI" id="CHEBI:18420"/>
        <label>3</label>
    </ligand>
</feature>
<feature type="binding site" evidence="1">
    <location>
        <position position="813"/>
    </location>
    <ligand>
        <name>Mn(2+)</name>
        <dbReference type="ChEBI" id="CHEBI:29035"/>
        <label>3</label>
    </ligand>
</feature>
<feature type="binding site" evidence="1">
    <location>
        <position position="827"/>
    </location>
    <ligand>
        <name>ATP</name>
        <dbReference type="ChEBI" id="CHEBI:30616"/>
        <label>2</label>
    </ligand>
</feature>
<feature type="binding site" evidence="1">
    <location>
        <position position="827"/>
    </location>
    <ligand>
        <name>Mg(2+)</name>
        <dbReference type="ChEBI" id="CHEBI:18420"/>
        <label>3</label>
    </ligand>
</feature>
<feature type="binding site" evidence="1">
    <location>
        <position position="827"/>
    </location>
    <ligand>
        <name>Mg(2+)</name>
        <dbReference type="ChEBI" id="CHEBI:18420"/>
        <label>4</label>
    </ligand>
</feature>
<feature type="binding site" evidence="1">
    <location>
        <position position="827"/>
    </location>
    <ligand>
        <name>Mn(2+)</name>
        <dbReference type="ChEBI" id="CHEBI:29035"/>
        <label>3</label>
    </ligand>
</feature>
<feature type="binding site" evidence="1">
    <location>
        <position position="827"/>
    </location>
    <ligand>
        <name>Mn(2+)</name>
        <dbReference type="ChEBI" id="CHEBI:29035"/>
        <label>4</label>
    </ligand>
</feature>
<feature type="binding site" evidence="1">
    <location>
        <position position="829"/>
    </location>
    <ligand>
        <name>Mg(2+)</name>
        <dbReference type="ChEBI" id="CHEBI:18420"/>
        <label>4</label>
    </ligand>
</feature>
<feature type="binding site" evidence="1">
    <location>
        <position position="829"/>
    </location>
    <ligand>
        <name>Mn(2+)</name>
        <dbReference type="ChEBI" id="CHEBI:29035"/>
        <label>4</label>
    </ligand>
</feature>
<evidence type="ECO:0000255" key="1">
    <source>
        <dbReference type="HAMAP-Rule" id="MF_01210"/>
    </source>
</evidence>
<dbReference type="EC" id="6.3.4.16" evidence="1"/>
<dbReference type="EC" id="6.3.5.5" evidence="1"/>
<dbReference type="EMBL" id="CP000678">
    <property type="protein sequence ID" value="ABQ86693.1"/>
    <property type="molecule type" value="Genomic_DNA"/>
</dbReference>
<dbReference type="RefSeq" id="WP_004032238.1">
    <property type="nucleotide sequence ID" value="NZ_CP117965.1"/>
</dbReference>
<dbReference type="SMR" id="A5UKG5"/>
<dbReference type="STRING" id="420247.Msm_0488"/>
<dbReference type="EnsemblBacteria" id="ABQ86693">
    <property type="protein sequence ID" value="ABQ86693"/>
    <property type="gene ID" value="Msm_0488"/>
</dbReference>
<dbReference type="GeneID" id="78817114"/>
<dbReference type="KEGG" id="msi:Msm_0488"/>
<dbReference type="PATRIC" id="fig|420247.28.peg.486"/>
<dbReference type="eggNOG" id="arCOG01594">
    <property type="taxonomic scope" value="Archaea"/>
</dbReference>
<dbReference type="HOGENOM" id="CLU_000513_1_0_2"/>
<dbReference type="UniPathway" id="UPA00068">
    <property type="reaction ID" value="UER00171"/>
</dbReference>
<dbReference type="UniPathway" id="UPA00070">
    <property type="reaction ID" value="UER00115"/>
</dbReference>
<dbReference type="Proteomes" id="UP000001992">
    <property type="component" value="Chromosome"/>
</dbReference>
<dbReference type="GO" id="GO:0005737">
    <property type="term" value="C:cytoplasm"/>
    <property type="evidence" value="ECO:0007669"/>
    <property type="project" value="TreeGrafter"/>
</dbReference>
<dbReference type="GO" id="GO:0005524">
    <property type="term" value="F:ATP binding"/>
    <property type="evidence" value="ECO:0007669"/>
    <property type="project" value="UniProtKB-UniRule"/>
</dbReference>
<dbReference type="GO" id="GO:0004087">
    <property type="term" value="F:carbamoyl-phosphate synthase (ammonia) activity"/>
    <property type="evidence" value="ECO:0007669"/>
    <property type="project" value="RHEA"/>
</dbReference>
<dbReference type="GO" id="GO:0004088">
    <property type="term" value="F:carbamoyl-phosphate synthase (glutamine-hydrolyzing) activity"/>
    <property type="evidence" value="ECO:0007669"/>
    <property type="project" value="UniProtKB-UniRule"/>
</dbReference>
<dbReference type="GO" id="GO:0046872">
    <property type="term" value="F:metal ion binding"/>
    <property type="evidence" value="ECO:0007669"/>
    <property type="project" value="UniProtKB-KW"/>
</dbReference>
<dbReference type="GO" id="GO:0044205">
    <property type="term" value="P:'de novo' UMP biosynthetic process"/>
    <property type="evidence" value="ECO:0007669"/>
    <property type="project" value="UniProtKB-UniRule"/>
</dbReference>
<dbReference type="GO" id="GO:0006541">
    <property type="term" value="P:glutamine metabolic process"/>
    <property type="evidence" value="ECO:0007669"/>
    <property type="project" value="TreeGrafter"/>
</dbReference>
<dbReference type="GO" id="GO:0006526">
    <property type="term" value="P:L-arginine biosynthetic process"/>
    <property type="evidence" value="ECO:0007669"/>
    <property type="project" value="UniProtKB-UniRule"/>
</dbReference>
<dbReference type="CDD" id="cd01424">
    <property type="entry name" value="MGS_CPS_II"/>
    <property type="match status" value="1"/>
</dbReference>
<dbReference type="FunFam" id="1.10.1030.10:FF:000002">
    <property type="entry name" value="Carbamoyl-phosphate synthase large chain"/>
    <property type="match status" value="1"/>
</dbReference>
<dbReference type="FunFam" id="3.30.1490.20:FF:000001">
    <property type="entry name" value="Carbamoyl-phosphate synthase large chain"/>
    <property type="match status" value="1"/>
</dbReference>
<dbReference type="FunFam" id="3.30.470.20:FF:000001">
    <property type="entry name" value="Carbamoyl-phosphate synthase large chain"/>
    <property type="match status" value="1"/>
</dbReference>
<dbReference type="FunFam" id="3.30.470.20:FF:000013">
    <property type="entry name" value="Carbamoyl-phosphate synthase large chain"/>
    <property type="match status" value="1"/>
</dbReference>
<dbReference type="FunFam" id="3.40.50.20:FF:000001">
    <property type="entry name" value="Carbamoyl-phosphate synthase large chain"/>
    <property type="match status" value="1"/>
</dbReference>
<dbReference type="FunFam" id="3.40.50.20:FF:000002">
    <property type="entry name" value="Carbamoyl-phosphate synthase large chain"/>
    <property type="match status" value="1"/>
</dbReference>
<dbReference type="Gene3D" id="3.40.50.20">
    <property type="match status" value="2"/>
</dbReference>
<dbReference type="Gene3D" id="3.30.1490.20">
    <property type="entry name" value="ATP-grasp fold, A domain"/>
    <property type="match status" value="1"/>
</dbReference>
<dbReference type="Gene3D" id="3.30.470.20">
    <property type="entry name" value="ATP-grasp fold, B domain"/>
    <property type="match status" value="2"/>
</dbReference>
<dbReference type="Gene3D" id="1.10.1030.10">
    <property type="entry name" value="Carbamoyl-phosphate synthetase, large subunit oligomerisation domain"/>
    <property type="match status" value="1"/>
</dbReference>
<dbReference type="Gene3D" id="3.40.50.1380">
    <property type="entry name" value="Methylglyoxal synthase-like domain"/>
    <property type="match status" value="1"/>
</dbReference>
<dbReference type="HAMAP" id="MF_01210_A">
    <property type="entry name" value="CPSase_L_chain_A"/>
    <property type="match status" value="1"/>
</dbReference>
<dbReference type="HAMAP" id="MF_01210_B">
    <property type="entry name" value="CPSase_L_chain_B"/>
    <property type="match status" value="1"/>
</dbReference>
<dbReference type="InterPro" id="IPR011761">
    <property type="entry name" value="ATP-grasp"/>
</dbReference>
<dbReference type="InterPro" id="IPR013815">
    <property type="entry name" value="ATP_grasp_subdomain_1"/>
</dbReference>
<dbReference type="InterPro" id="IPR006275">
    <property type="entry name" value="CarbamoylP_synth_lsu"/>
</dbReference>
<dbReference type="InterPro" id="IPR005480">
    <property type="entry name" value="CarbamoylP_synth_lsu_oligo"/>
</dbReference>
<dbReference type="InterPro" id="IPR036897">
    <property type="entry name" value="CarbamoylP_synth_lsu_oligo_sf"/>
</dbReference>
<dbReference type="InterPro" id="IPR005479">
    <property type="entry name" value="CbamoylP_synth_lsu-like_ATP-bd"/>
</dbReference>
<dbReference type="InterPro" id="IPR005483">
    <property type="entry name" value="CbamoylP_synth_lsu_CPSase_dom"/>
</dbReference>
<dbReference type="InterPro" id="IPR011607">
    <property type="entry name" value="MGS-like_dom"/>
</dbReference>
<dbReference type="InterPro" id="IPR036914">
    <property type="entry name" value="MGS-like_dom_sf"/>
</dbReference>
<dbReference type="InterPro" id="IPR033937">
    <property type="entry name" value="MGS_CPS_CarB"/>
</dbReference>
<dbReference type="InterPro" id="IPR016185">
    <property type="entry name" value="PreATP-grasp_dom_sf"/>
</dbReference>
<dbReference type="NCBIfam" id="TIGR01369">
    <property type="entry name" value="CPSaseII_lrg"/>
    <property type="match status" value="1"/>
</dbReference>
<dbReference type="NCBIfam" id="NF003671">
    <property type="entry name" value="PRK05294.1"/>
    <property type="match status" value="1"/>
</dbReference>
<dbReference type="NCBIfam" id="NF009455">
    <property type="entry name" value="PRK12815.1"/>
    <property type="match status" value="1"/>
</dbReference>
<dbReference type="PANTHER" id="PTHR11405:SF53">
    <property type="entry name" value="CARBAMOYL-PHOSPHATE SYNTHASE [AMMONIA], MITOCHONDRIAL"/>
    <property type="match status" value="1"/>
</dbReference>
<dbReference type="PANTHER" id="PTHR11405">
    <property type="entry name" value="CARBAMOYLTRANSFERASE FAMILY MEMBER"/>
    <property type="match status" value="1"/>
</dbReference>
<dbReference type="Pfam" id="PF02786">
    <property type="entry name" value="CPSase_L_D2"/>
    <property type="match status" value="2"/>
</dbReference>
<dbReference type="Pfam" id="PF02787">
    <property type="entry name" value="CPSase_L_D3"/>
    <property type="match status" value="1"/>
</dbReference>
<dbReference type="Pfam" id="PF02142">
    <property type="entry name" value="MGS"/>
    <property type="match status" value="1"/>
</dbReference>
<dbReference type="PRINTS" id="PR00098">
    <property type="entry name" value="CPSASE"/>
</dbReference>
<dbReference type="SMART" id="SM01096">
    <property type="entry name" value="CPSase_L_D3"/>
    <property type="match status" value="1"/>
</dbReference>
<dbReference type="SMART" id="SM00851">
    <property type="entry name" value="MGS"/>
    <property type="match status" value="1"/>
</dbReference>
<dbReference type="SUPFAM" id="SSF48108">
    <property type="entry name" value="Carbamoyl phosphate synthetase, large subunit connection domain"/>
    <property type="match status" value="1"/>
</dbReference>
<dbReference type="SUPFAM" id="SSF56059">
    <property type="entry name" value="Glutathione synthetase ATP-binding domain-like"/>
    <property type="match status" value="2"/>
</dbReference>
<dbReference type="SUPFAM" id="SSF52335">
    <property type="entry name" value="Methylglyoxal synthase-like"/>
    <property type="match status" value="1"/>
</dbReference>
<dbReference type="SUPFAM" id="SSF52440">
    <property type="entry name" value="PreATP-grasp domain"/>
    <property type="match status" value="2"/>
</dbReference>
<dbReference type="PROSITE" id="PS50975">
    <property type="entry name" value="ATP_GRASP"/>
    <property type="match status" value="2"/>
</dbReference>
<dbReference type="PROSITE" id="PS00866">
    <property type="entry name" value="CPSASE_1"/>
    <property type="match status" value="2"/>
</dbReference>
<dbReference type="PROSITE" id="PS00867">
    <property type="entry name" value="CPSASE_2"/>
    <property type="match status" value="2"/>
</dbReference>
<dbReference type="PROSITE" id="PS51855">
    <property type="entry name" value="MGS"/>
    <property type="match status" value="1"/>
</dbReference>
<keyword id="KW-0028">Amino-acid biosynthesis</keyword>
<keyword id="KW-0055">Arginine biosynthesis</keyword>
<keyword id="KW-0067">ATP-binding</keyword>
<keyword id="KW-0436">Ligase</keyword>
<keyword id="KW-0460">Magnesium</keyword>
<keyword id="KW-0464">Manganese</keyword>
<keyword id="KW-0479">Metal-binding</keyword>
<keyword id="KW-0547">Nucleotide-binding</keyword>
<keyword id="KW-0665">Pyrimidine biosynthesis</keyword>
<keyword id="KW-0677">Repeat</keyword>